<comment type="function">
    <text evidence="1">RNA-binding protein that binds specific mRNAs including the ASH1 mRNA, coding for a repressor of the HO endonuclease. Part of the mRNA localization machinery that restricts accumulation of certain proteins to the bud and in the daughter cell. Required for the delivery of cortical endoplasmic reticulum into the emerging bud (By similarity).</text>
</comment>
<comment type="subcellular location">
    <subcellularLocation>
        <location evidence="1">Endoplasmic reticulum membrane</location>
        <topology evidence="1">Peripheral membrane protein</topology>
    </subcellularLocation>
</comment>
<comment type="similarity">
    <text evidence="5">Belongs to the SHE3 family.</text>
</comment>
<protein>
    <recommendedName>
        <fullName>SWI5-dependent HO expression protein 3</fullName>
    </recommendedName>
</protein>
<dbReference type="EMBL" id="ACFL01000444">
    <property type="protein sequence ID" value="EEU04300.1"/>
    <property type="molecule type" value="Genomic_DNA"/>
</dbReference>
<dbReference type="SMR" id="C7GY13"/>
<dbReference type="OrthoDB" id="39876at4893"/>
<dbReference type="Proteomes" id="UP000008073">
    <property type="component" value="Unassembled WGS sequence"/>
</dbReference>
<dbReference type="GO" id="GO:0005789">
    <property type="term" value="C:endoplasmic reticulum membrane"/>
    <property type="evidence" value="ECO:0007669"/>
    <property type="project" value="UniProtKB-SubCell"/>
</dbReference>
<dbReference type="GO" id="GO:0003723">
    <property type="term" value="F:RNA binding"/>
    <property type="evidence" value="ECO:0007669"/>
    <property type="project" value="UniProtKB-KW"/>
</dbReference>
<dbReference type="GO" id="GO:0048309">
    <property type="term" value="P:endoplasmic reticulum inheritance"/>
    <property type="evidence" value="ECO:0007669"/>
    <property type="project" value="InterPro"/>
</dbReference>
<dbReference type="GO" id="GO:0051028">
    <property type="term" value="P:mRNA transport"/>
    <property type="evidence" value="ECO:0007669"/>
    <property type="project" value="UniProtKB-KW"/>
</dbReference>
<dbReference type="InterPro" id="IPR031398">
    <property type="entry name" value="She3"/>
</dbReference>
<dbReference type="Pfam" id="PF17078">
    <property type="entry name" value="SHE3"/>
    <property type="match status" value="1"/>
</dbReference>
<keyword id="KW-0175">Coiled coil</keyword>
<keyword id="KW-0256">Endoplasmic reticulum</keyword>
<keyword id="KW-0472">Membrane</keyword>
<keyword id="KW-0509">mRNA transport</keyword>
<keyword id="KW-0597">Phosphoprotein</keyword>
<keyword id="KW-0694">RNA-binding</keyword>
<keyword id="KW-0813">Transport</keyword>
<sequence>MSDQDNTQTSSSKLAPHHNIFMANLESSPTKDRNTSSQNASSSRVIESLHDQIDMLTKTNLQLTTQSQNLLSKLELAQSKESKLLENLNLLKNENENLNSIFERKNKKLKELEKDYSELSNRYNEQKEKMDQLSKLAKNSSAIEQSCSEKLQNMEVNYNSLLESQNLYRDHYSDEISKLNEKIGLLELELSNQNLNYGSDTSSNSDIELNLNKFNDCVKDLKSLETEKDSKLSKIITHSLDELNLQSWLNLYQTNENLISTFAEKMDLKDVLKRNDEKISNKGAVVQTLKKNVQTQVESNNADALSSNNAQDMLPIKMVKLRKTPNTNDSSSNGNSSNNKRRSFYTASPLLSSGSIPKSASPVLPGVKRTASVRKPSSSSSKTNVTHNNDPSTSPTISVPPGVTRTVSSTHKKKRNSMVVHGAQS</sequence>
<feature type="chain" id="PRO_0000408938" description="SWI5-dependent HO expression protein 3">
    <location>
        <begin position="1"/>
        <end position="425"/>
    </location>
</feature>
<feature type="region of interest" description="Disordered" evidence="4">
    <location>
        <begin position="24"/>
        <end position="45"/>
    </location>
</feature>
<feature type="region of interest" description="Disordered" evidence="4">
    <location>
        <begin position="322"/>
        <end position="425"/>
    </location>
</feature>
<feature type="coiled-coil region" evidence="3">
    <location>
        <begin position="68"/>
        <end position="197"/>
    </location>
</feature>
<feature type="compositionally biased region" description="Polar residues" evidence="4">
    <location>
        <begin position="35"/>
        <end position="45"/>
    </location>
</feature>
<feature type="compositionally biased region" description="Low complexity" evidence="4">
    <location>
        <begin position="326"/>
        <end position="338"/>
    </location>
</feature>
<feature type="compositionally biased region" description="Polar residues" evidence="4">
    <location>
        <begin position="345"/>
        <end position="358"/>
    </location>
</feature>
<feature type="compositionally biased region" description="Polar residues" evidence="4">
    <location>
        <begin position="382"/>
        <end position="397"/>
    </location>
</feature>
<feature type="modified residue" description="Phosphoserine" evidence="2">
    <location>
        <position position="343"/>
    </location>
</feature>
<feature type="modified residue" description="Phosphoserine" evidence="2">
    <location>
        <position position="394"/>
    </location>
</feature>
<accession>C7GY13</accession>
<reference key="1">
    <citation type="journal article" date="2009" name="Genome Res.">
        <title>Genome structure of a Saccharomyces cerevisiae strain widely used in bioethanol production.</title>
        <authorList>
            <person name="Argueso J.L."/>
            <person name="Carazzolle M.F."/>
            <person name="Mieczkowski P.A."/>
            <person name="Duarte F.M."/>
            <person name="Netto O.V.C."/>
            <person name="Missawa S.K."/>
            <person name="Galzerani F."/>
            <person name="Costa G.G.L."/>
            <person name="Vidal R.O."/>
            <person name="Noronha M.F."/>
            <person name="Dominska M."/>
            <person name="Andrietta M.G.S."/>
            <person name="Andrietta S.R."/>
            <person name="Cunha A.F."/>
            <person name="Gomes L.H."/>
            <person name="Tavares F.C.A."/>
            <person name="Alcarde A.R."/>
            <person name="Dietrich F.S."/>
            <person name="McCusker J.H."/>
            <person name="Petes T.D."/>
            <person name="Pereira G.A.G."/>
        </authorList>
    </citation>
    <scope>NUCLEOTIDE SEQUENCE [LARGE SCALE GENOMIC DNA]</scope>
    <source>
        <strain>JAY291</strain>
    </source>
</reference>
<gene>
    <name type="primary">SHE3</name>
    <name type="ORF">C1Q_05432</name>
</gene>
<name>SHE3_YEAS2</name>
<organism>
    <name type="scientific">Saccharomyces cerevisiae (strain JAY291)</name>
    <name type="common">Baker's yeast</name>
    <dbReference type="NCBI Taxonomy" id="574961"/>
    <lineage>
        <taxon>Eukaryota</taxon>
        <taxon>Fungi</taxon>
        <taxon>Dikarya</taxon>
        <taxon>Ascomycota</taxon>
        <taxon>Saccharomycotina</taxon>
        <taxon>Saccharomycetes</taxon>
        <taxon>Saccharomycetales</taxon>
        <taxon>Saccharomycetaceae</taxon>
        <taxon>Saccharomyces</taxon>
    </lineage>
</organism>
<evidence type="ECO:0000250" key="1"/>
<evidence type="ECO:0000250" key="2">
    <source>
        <dbReference type="UniProtKB" id="P38272"/>
    </source>
</evidence>
<evidence type="ECO:0000255" key="3"/>
<evidence type="ECO:0000256" key="4">
    <source>
        <dbReference type="SAM" id="MobiDB-lite"/>
    </source>
</evidence>
<evidence type="ECO:0000305" key="5"/>
<proteinExistence type="inferred from homology"/>